<protein>
    <recommendedName>
        <fullName evidence="1">D-aminoacyl-tRNA deacylase</fullName>
        <ecNumber evidence="1">3.1.1.96</ecNumber>
    </recommendedName>
    <alternativeName>
        <fullName>D-tyrosyl-tRNA(Tyr) deacylase</fullName>
    </alternativeName>
</protein>
<keyword id="KW-0378">Hydrolase</keyword>
<keyword id="KW-0479">Metal-binding</keyword>
<keyword id="KW-1185">Reference proteome</keyword>
<keyword id="KW-0862">Zinc</keyword>
<proteinExistence type="inferred from homology"/>
<gene>
    <name evidence="1" type="primary">dtdA</name>
    <name type="ordered locus">Smar_0445</name>
</gene>
<organism>
    <name type="scientific">Staphylothermus marinus (strain ATCC 43588 / DSM 3639 / JCM 9404 / F1)</name>
    <dbReference type="NCBI Taxonomy" id="399550"/>
    <lineage>
        <taxon>Archaea</taxon>
        <taxon>Thermoproteota</taxon>
        <taxon>Thermoprotei</taxon>
        <taxon>Desulfurococcales</taxon>
        <taxon>Desulfurococcaceae</taxon>
        <taxon>Staphylothermus</taxon>
    </lineage>
</organism>
<reference key="1">
    <citation type="journal article" date="2009" name="BMC Genomics">
        <title>The complete genome sequence of Staphylothermus marinus reveals differences in sulfur metabolism among heterotrophic Crenarchaeota.</title>
        <authorList>
            <person name="Anderson I.J."/>
            <person name="Dharmarajan L."/>
            <person name="Rodriguez J."/>
            <person name="Hooper S."/>
            <person name="Porat I."/>
            <person name="Ulrich L.E."/>
            <person name="Elkins J.G."/>
            <person name="Mavromatis K."/>
            <person name="Sun H."/>
            <person name="Land M."/>
            <person name="Lapidus A."/>
            <person name="Lucas S."/>
            <person name="Barry K."/>
            <person name="Huber H."/>
            <person name="Zhulin I.B."/>
            <person name="Whitman W.B."/>
            <person name="Mukhopadhyay B."/>
            <person name="Woese C."/>
            <person name="Bristow J."/>
            <person name="Kyrpides N."/>
        </authorList>
    </citation>
    <scope>NUCLEOTIDE SEQUENCE [LARGE SCALE GENOMIC DNA]</scope>
    <source>
        <strain>ATCC 43588 / DSM 3639 / JCM 9404 / F1</strain>
    </source>
</reference>
<reference key="2">
    <citation type="journal article" date="2009" name="Stand. Genomic Sci.">
        <title>Complete genome sequence of Staphylothermus marinus Stetter and Fiala 1986 type strain F1.</title>
        <authorList>
            <person name="Anderson I.J."/>
            <person name="Sun H."/>
            <person name="Lapidus A."/>
            <person name="Copeland A."/>
            <person name="Glavina Del Rio T."/>
            <person name="Tice H."/>
            <person name="Dalin E."/>
            <person name="Lucas S."/>
            <person name="Barry K."/>
            <person name="Land M."/>
            <person name="Richardson P."/>
            <person name="Huber H."/>
            <person name="Kyrpides N.C."/>
        </authorList>
    </citation>
    <scope>NUCLEOTIDE SEQUENCE [LARGE SCALE GENOMIC DNA]</scope>
    <source>
        <strain>ATCC 43588 / DSM 3639 / JCM 9404 / F1</strain>
    </source>
</reference>
<accession>A3DLP6</accession>
<evidence type="ECO:0000255" key="1">
    <source>
        <dbReference type="HAMAP-Rule" id="MF_00562"/>
    </source>
</evidence>
<sequence>MEIYGIVYSVKDPAGFGMAEYIIKYYGLEKSNVCKNAITCYVGNNFVLAGFSEDVIYFDFLDGRLPDKVSRYIVLSRHSSAKKVCSYTVHHTGNFGPEAPYGGRPRTLSIANPIVSHKLLINLSILAEEYGRIDEYEVSYEATHHGPTDVRKPLNFIEIGSTIDEWKDPVNHEIVALAVIKFLENPNHECIPVTGVGGGHYPRKHTKMAFEKNYCYGHIMAKYALQYLSPEILEEMIVKSDPVPQRIIVEKKGTRREHRRIIEQYVLNRGIVLEYI</sequence>
<feature type="chain" id="PRO_0000345230" description="D-aminoacyl-tRNA deacylase">
    <location>
        <begin position="1"/>
        <end position="276"/>
    </location>
</feature>
<dbReference type="EC" id="3.1.1.96" evidence="1"/>
<dbReference type="EMBL" id="CP000575">
    <property type="protein sequence ID" value="ABN69556.1"/>
    <property type="molecule type" value="Genomic_DNA"/>
</dbReference>
<dbReference type="RefSeq" id="WP_011838747.1">
    <property type="nucleotide sequence ID" value="NC_009033.1"/>
</dbReference>
<dbReference type="SMR" id="A3DLP6"/>
<dbReference type="STRING" id="399550.Smar_0445"/>
<dbReference type="GeneID" id="4906558"/>
<dbReference type="KEGG" id="smr:Smar_0445"/>
<dbReference type="eggNOG" id="arCOG01616">
    <property type="taxonomic scope" value="Archaea"/>
</dbReference>
<dbReference type="HOGENOM" id="CLU_056464_1_0_2"/>
<dbReference type="OrthoDB" id="9863at2157"/>
<dbReference type="Proteomes" id="UP000000254">
    <property type="component" value="Chromosome"/>
</dbReference>
<dbReference type="GO" id="GO:0051499">
    <property type="term" value="F:D-aminoacyl-tRNA deacylase activity"/>
    <property type="evidence" value="ECO:0007669"/>
    <property type="project" value="UniProtKB-UniRule"/>
</dbReference>
<dbReference type="GO" id="GO:0008270">
    <property type="term" value="F:zinc ion binding"/>
    <property type="evidence" value="ECO:0007669"/>
    <property type="project" value="UniProtKB-UniRule"/>
</dbReference>
<dbReference type="GO" id="GO:0019478">
    <property type="term" value="P:D-amino acid catabolic process"/>
    <property type="evidence" value="ECO:0007669"/>
    <property type="project" value="UniProtKB-UniRule"/>
</dbReference>
<dbReference type="Gene3D" id="3.40.50.10700">
    <property type="entry name" value="AF0625-like"/>
    <property type="match status" value="1"/>
</dbReference>
<dbReference type="Gene3D" id="3.40.630.50">
    <property type="entry name" value="AF0625-like"/>
    <property type="match status" value="1"/>
</dbReference>
<dbReference type="HAMAP" id="MF_00562">
    <property type="entry name" value="Deacylase_DtdA"/>
    <property type="match status" value="1"/>
</dbReference>
<dbReference type="InterPro" id="IPR018033">
    <property type="entry name" value="Deacylase_DtdA_archaea"/>
</dbReference>
<dbReference type="InterPro" id="IPR007508">
    <property type="entry name" value="DtdA"/>
</dbReference>
<dbReference type="NCBIfam" id="NF003072">
    <property type="entry name" value="PRK03995.1-4"/>
    <property type="match status" value="1"/>
</dbReference>
<dbReference type="PANTHER" id="PTHR34667">
    <property type="entry name" value="D-AMINOACYL-TRNA DEACYLASE"/>
    <property type="match status" value="1"/>
</dbReference>
<dbReference type="PANTHER" id="PTHR34667:SF1">
    <property type="entry name" value="D-AMINOACYL-TRNA DEACYLASE"/>
    <property type="match status" value="1"/>
</dbReference>
<dbReference type="Pfam" id="PF04414">
    <property type="entry name" value="tRNA_deacylase"/>
    <property type="match status" value="1"/>
</dbReference>
<dbReference type="PIRSF" id="PIRSF016210">
    <property type="entry name" value="UCP016210"/>
    <property type="match status" value="1"/>
</dbReference>
<dbReference type="SUPFAM" id="SSF142535">
    <property type="entry name" value="AF0625-like"/>
    <property type="match status" value="1"/>
</dbReference>
<comment type="function">
    <text evidence="1">D-aminoacyl-tRNA deacylase with broad substrate specificity. By recycling D-aminoacyl-tRNA to D-amino acids and free tRNA molecules, this enzyme counteracts the toxicity associated with the formation of D-aminoacyl-tRNA entities in vivo.</text>
</comment>
<comment type="catalytic activity">
    <reaction evidence="1">
        <text>a D-aminoacyl-tRNA + H2O = a tRNA + a D-alpha-amino acid + H(+)</text>
        <dbReference type="Rhea" id="RHEA:13953"/>
        <dbReference type="Rhea" id="RHEA-COMP:10123"/>
        <dbReference type="Rhea" id="RHEA-COMP:10124"/>
        <dbReference type="ChEBI" id="CHEBI:15377"/>
        <dbReference type="ChEBI" id="CHEBI:15378"/>
        <dbReference type="ChEBI" id="CHEBI:59871"/>
        <dbReference type="ChEBI" id="CHEBI:78442"/>
        <dbReference type="ChEBI" id="CHEBI:79333"/>
        <dbReference type="EC" id="3.1.1.96"/>
    </reaction>
</comment>
<comment type="catalytic activity">
    <reaction evidence="1">
        <text>glycyl-tRNA(Ala) + H2O = tRNA(Ala) + glycine + H(+)</text>
        <dbReference type="Rhea" id="RHEA:53744"/>
        <dbReference type="Rhea" id="RHEA-COMP:9657"/>
        <dbReference type="Rhea" id="RHEA-COMP:13640"/>
        <dbReference type="ChEBI" id="CHEBI:15377"/>
        <dbReference type="ChEBI" id="CHEBI:15378"/>
        <dbReference type="ChEBI" id="CHEBI:57305"/>
        <dbReference type="ChEBI" id="CHEBI:78442"/>
        <dbReference type="ChEBI" id="CHEBI:78522"/>
        <dbReference type="EC" id="3.1.1.96"/>
    </reaction>
</comment>
<comment type="cofactor">
    <cofactor evidence="1">
        <name>Zn(2+)</name>
        <dbReference type="ChEBI" id="CHEBI:29105"/>
    </cofactor>
    <text evidence="1">Binds 2 Zn(2+) ions per subunit.</text>
</comment>
<comment type="subunit">
    <text evidence="1">Monomer.</text>
</comment>
<comment type="similarity">
    <text evidence="1">Belongs to the DtdA deacylase family.</text>
</comment>
<name>DTDA_STAMF</name>